<name>MURB_RHIME</name>
<gene>
    <name evidence="1" type="primary">murB</name>
    <name type="ordered locus">R02174</name>
    <name type="ORF">SMc01868</name>
</gene>
<protein>
    <recommendedName>
        <fullName evidence="1">UDP-N-acetylenolpyruvoylglucosamine reductase</fullName>
        <ecNumber evidence="1">1.3.1.98</ecNumber>
    </recommendedName>
    <alternativeName>
        <fullName evidence="1">UDP-N-acetylmuramate dehydrogenase</fullName>
    </alternativeName>
</protein>
<sequence length="324" mass="35323">MKQVNGQKLLDSLGSGVAAIRGRLTPDAPMDRVTWFRAGGLAELMFQPHDTDDLVAFLKLVPEEVPVMVVGVGSNLLVRDGGIPGVVIRLSAKGFGDLELAGENRIKAGAICPDKNIAAMALDHGIGGFYFYYGIPGSIGGALRMNAGANSGETSERVVEVHAVDRKGNRHVLSKAEMGYGYRHSGAAKELIFTHAIFEGYAEDKTKIRTDMDAVRQHRETVQPIREKTGGSTFKNPDGHSAWKLIDEAGCRGMMIGNAQMSPLHCNFMINTGQATGYELEYLGETVRQRVMEHSGVKLEWEIKRVGNFMPGYEIREFLGRATA</sequence>
<reference key="1">
    <citation type="journal article" date="2001" name="Proc. Natl. Acad. Sci. U.S.A.">
        <title>Analysis of the chromosome sequence of the legume symbiont Sinorhizobium meliloti strain 1021.</title>
        <authorList>
            <person name="Capela D."/>
            <person name="Barloy-Hubler F."/>
            <person name="Gouzy J."/>
            <person name="Bothe G."/>
            <person name="Ampe F."/>
            <person name="Batut J."/>
            <person name="Boistard P."/>
            <person name="Becker A."/>
            <person name="Boutry M."/>
            <person name="Cadieu E."/>
            <person name="Dreano S."/>
            <person name="Gloux S."/>
            <person name="Godrie T."/>
            <person name="Goffeau A."/>
            <person name="Kahn D."/>
            <person name="Kiss E."/>
            <person name="Lelaure V."/>
            <person name="Masuy D."/>
            <person name="Pohl T."/>
            <person name="Portetelle D."/>
            <person name="Puehler A."/>
            <person name="Purnelle B."/>
            <person name="Ramsperger U."/>
            <person name="Renard C."/>
            <person name="Thebault P."/>
            <person name="Vandenbol M."/>
            <person name="Weidner S."/>
            <person name="Galibert F."/>
        </authorList>
    </citation>
    <scope>NUCLEOTIDE SEQUENCE [LARGE SCALE GENOMIC DNA]</scope>
    <source>
        <strain>1021</strain>
    </source>
</reference>
<reference key="2">
    <citation type="journal article" date="2001" name="Science">
        <title>The composite genome of the legume symbiont Sinorhizobium meliloti.</title>
        <authorList>
            <person name="Galibert F."/>
            <person name="Finan T.M."/>
            <person name="Long S.R."/>
            <person name="Puehler A."/>
            <person name="Abola P."/>
            <person name="Ampe F."/>
            <person name="Barloy-Hubler F."/>
            <person name="Barnett M.J."/>
            <person name="Becker A."/>
            <person name="Boistard P."/>
            <person name="Bothe G."/>
            <person name="Boutry M."/>
            <person name="Bowser L."/>
            <person name="Buhrmester J."/>
            <person name="Cadieu E."/>
            <person name="Capela D."/>
            <person name="Chain P."/>
            <person name="Cowie A."/>
            <person name="Davis R.W."/>
            <person name="Dreano S."/>
            <person name="Federspiel N.A."/>
            <person name="Fisher R.F."/>
            <person name="Gloux S."/>
            <person name="Godrie T."/>
            <person name="Goffeau A."/>
            <person name="Golding B."/>
            <person name="Gouzy J."/>
            <person name="Gurjal M."/>
            <person name="Hernandez-Lucas I."/>
            <person name="Hong A."/>
            <person name="Huizar L."/>
            <person name="Hyman R.W."/>
            <person name="Jones T."/>
            <person name="Kahn D."/>
            <person name="Kahn M.L."/>
            <person name="Kalman S."/>
            <person name="Keating D.H."/>
            <person name="Kiss E."/>
            <person name="Komp C."/>
            <person name="Lelaure V."/>
            <person name="Masuy D."/>
            <person name="Palm C."/>
            <person name="Peck M.C."/>
            <person name="Pohl T.M."/>
            <person name="Portetelle D."/>
            <person name="Purnelle B."/>
            <person name="Ramsperger U."/>
            <person name="Surzycki R."/>
            <person name="Thebault P."/>
            <person name="Vandenbol M."/>
            <person name="Vorhoelter F.J."/>
            <person name="Weidner S."/>
            <person name="Wells D.H."/>
            <person name="Wong K."/>
            <person name="Yeh K.-C."/>
            <person name="Batut J."/>
        </authorList>
    </citation>
    <scope>NUCLEOTIDE SEQUENCE [LARGE SCALE GENOMIC DNA]</scope>
    <source>
        <strain>1021</strain>
    </source>
</reference>
<organism>
    <name type="scientific">Rhizobium meliloti (strain 1021)</name>
    <name type="common">Ensifer meliloti</name>
    <name type="synonym">Sinorhizobium meliloti</name>
    <dbReference type="NCBI Taxonomy" id="266834"/>
    <lineage>
        <taxon>Bacteria</taxon>
        <taxon>Pseudomonadati</taxon>
        <taxon>Pseudomonadota</taxon>
        <taxon>Alphaproteobacteria</taxon>
        <taxon>Hyphomicrobiales</taxon>
        <taxon>Rhizobiaceae</taxon>
        <taxon>Sinorhizobium/Ensifer group</taxon>
        <taxon>Sinorhizobium</taxon>
    </lineage>
</organism>
<evidence type="ECO:0000255" key="1">
    <source>
        <dbReference type="HAMAP-Rule" id="MF_00037"/>
    </source>
</evidence>
<dbReference type="EC" id="1.3.1.98" evidence="1"/>
<dbReference type="EMBL" id="AL591688">
    <property type="protein sequence ID" value="CAC46753.1"/>
    <property type="molecule type" value="Genomic_DNA"/>
</dbReference>
<dbReference type="RefSeq" id="NP_386280.1">
    <property type="nucleotide sequence ID" value="NC_003047.1"/>
</dbReference>
<dbReference type="RefSeq" id="WP_010969746.1">
    <property type="nucleotide sequence ID" value="NC_003047.1"/>
</dbReference>
<dbReference type="SMR" id="Q92NM1"/>
<dbReference type="EnsemblBacteria" id="CAC46753">
    <property type="protein sequence ID" value="CAC46753"/>
    <property type="gene ID" value="SMc01868"/>
</dbReference>
<dbReference type="KEGG" id="sme:SMc01868"/>
<dbReference type="PATRIC" id="fig|266834.11.peg.3640"/>
<dbReference type="eggNOG" id="COG0812">
    <property type="taxonomic scope" value="Bacteria"/>
</dbReference>
<dbReference type="HOGENOM" id="CLU_035304_1_0_5"/>
<dbReference type="OrthoDB" id="9804753at2"/>
<dbReference type="UniPathway" id="UPA00219"/>
<dbReference type="Proteomes" id="UP000001976">
    <property type="component" value="Chromosome"/>
</dbReference>
<dbReference type="GO" id="GO:0005829">
    <property type="term" value="C:cytosol"/>
    <property type="evidence" value="ECO:0007669"/>
    <property type="project" value="TreeGrafter"/>
</dbReference>
<dbReference type="GO" id="GO:0071949">
    <property type="term" value="F:FAD binding"/>
    <property type="evidence" value="ECO:0007669"/>
    <property type="project" value="InterPro"/>
</dbReference>
<dbReference type="GO" id="GO:0008762">
    <property type="term" value="F:UDP-N-acetylmuramate dehydrogenase activity"/>
    <property type="evidence" value="ECO:0007669"/>
    <property type="project" value="UniProtKB-UniRule"/>
</dbReference>
<dbReference type="GO" id="GO:0051301">
    <property type="term" value="P:cell division"/>
    <property type="evidence" value="ECO:0007669"/>
    <property type="project" value="UniProtKB-KW"/>
</dbReference>
<dbReference type="GO" id="GO:0071555">
    <property type="term" value="P:cell wall organization"/>
    <property type="evidence" value="ECO:0007669"/>
    <property type="project" value="UniProtKB-KW"/>
</dbReference>
<dbReference type="GO" id="GO:0009252">
    <property type="term" value="P:peptidoglycan biosynthetic process"/>
    <property type="evidence" value="ECO:0007669"/>
    <property type="project" value="UniProtKB-UniRule"/>
</dbReference>
<dbReference type="GO" id="GO:0008360">
    <property type="term" value="P:regulation of cell shape"/>
    <property type="evidence" value="ECO:0007669"/>
    <property type="project" value="UniProtKB-KW"/>
</dbReference>
<dbReference type="Gene3D" id="3.30.465.10">
    <property type="match status" value="1"/>
</dbReference>
<dbReference type="Gene3D" id="3.90.78.10">
    <property type="entry name" value="UDP-N-acetylenolpyruvoylglucosamine reductase, C-terminal domain"/>
    <property type="match status" value="1"/>
</dbReference>
<dbReference type="Gene3D" id="3.30.43.10">
    <property type="entry name" value="Uridine Diphospho-n-acetylenolpyruvylglucosamine Reductase, domain 2"/>
    <property type="match status" value="1"/>
</dbReference>
<dbReference type="HAMAP" id="MF_00037">
    <property type="entry name" value="MurB"/>
    <property type="match status" value="1"/>
</dbReference>
<dbReference type="InterPro" id="IPR016166">
    <property type="entry name" value="FAD-bd_PCMH"/>
</dbReference>
<dbReference type="InterPro" id="IPR036318">
    <property type="entry name" value="FAD-bd_PCMH-like_sf"/>
</dbReference>
<dbReference type="InterPro" id="IPR016167">
    <property type="entry name" value="FAD-bd_PCMH_sub1"/>
</dbReference>
<dbReference type="InterPro" id="IPR016169">
    <property type="entry name" value="FAD-bd_PCMH_sub2"/>
</dbReference>
<dbReference type="InterPro" id="IPR003170">
    <property type="entry name" value="MurB"/>
</dbReference>
<dbReference type="InterPro" id="IPR011601">
    <property type="entry name" value="MurB_C"/>
</dbReference>
<dbReference type="InterPro" id="IPR036635">
    <property type="entry name" value="MurB_C_sf"/>
</dbReference>
<dbReference type="InterPro" id="IPR006094">
    <property type="entry name" value="Oxid_FAD_bind_N"/>
</dbReference>
<dbReference type="NCBIfam" id="TIGR00179">
    <property type="entry name" value="murB"/>
    <property type="match status" value="1"/>
</dbReference>
<dbReference type="NCBIfam" id="NF010480">
    <property type="entry name" value="PRK13905.1"/>
    <property type="match status" value="1"/>
</dbReference>
<dbReference type="PANTHER" id="PTHR21071">
    <property type="entry name" value="UDP-N-ACETYLENOLPYRUVOYLGLUCOSAMINE REDUCTASE"/>
    <property type="match status" value="1"/>
</dbReference>
<dbReference type="PANTHER" id="PTHR21071:SF4">
    <property type="entry name" value="UDP-N-ACETYLENOLPYRUVOYLGLUCOSAMINE REDUCTASE"/>
    <property type="match status" value="1"/>
</dbReference>
<dbReference type="Pfam" id="PF01565">
    <property type="entry name" value="FAD_binding_4"/>
    <property type="match status" value="1"/>
</dbReference>
<dbReference type="Pfam" id="PF02873">
    <property type="entry name" value="MurB_C"/>
    <property type="match status" value="1"/>
</dbReference>
<dbReference type="SUPFAM" id="SSF56176">
    <property type="entry name" value="FAD-binding/transporter-associated domain-like"/>
    <property type="match status" value="1"/>
</dbReference>
<dbReference type="SUPFAM" id="SSF56194">
    <property type="entry name" value="Uridine diphospho-N-Acetylenolpyruvylglucosamine reductase, MurB, C-terminal domain"/>
    <property type="match status" value="1"/>
</dbReference>
<dbReference type="PROSITE" id="PS51387">
    <property type="entry name" value="FAD_PCMH"/>
    <property type="match status" value="1"/>
</dbReference>
<keyword id="KW-0131">Cell cycle</keyword>
<keyword id="KW-0132">Cell division</keyword>
<keyword id="KW-0133">Cell shape</keyword>
<keyword id="KW-0961">Cell wall biogenesis/degradation</keyword>
<keyword id="KW-0963">Cytoplasm</keyword>
<keyword id="KW-0274">FAD</keyword>
<keyword id="KW-0285">Flavoprotein</keyword>
<keyword id="KW-0521">NADP</keyword>
<keyword id="KW-0560">Oxidoreductase</keyword>
<keyword id="KW-0573">Peptidoglycan synthesis</keyword>
<keyword id="KW-1185">Reference proteome</keyword>
<proteinExistence type="inferred from homology"/>
<comment type="function">
    <text evidence="1">Cell wall formation.</text>
</comment>
<comment type="catalytic activity">
    <reaction evidence="1">
        <text>UDP-N-acetyl-alpha-D-muramate + NADP(+) = UDP-N-acetyl-3-O-(1-carboxyvinyl)-alpha-D-glucosamine + NADPH + H(+)</text>
        <dbReference type="Rhea" id="RHEA:12248"/>
        <dbReference type="ChEBI" id="CHEBI:15378"/>
        <dbReference type="ChEBI" id="CHEBI:57783"/>
        <dbReference type="ChEBI" id="CHEBI:58349"/>
        <dbReference type="ChEBI" id="CHEBI:68483"/>
        <dbReference type="ChEBI" id="CHEBI:70757"/>
        <dbReference type="EC" id="1.3.1.98"/>
    </reaction>
</comment>
<comment type="cofactor">
    <cofactor evidence="1">
        <name>FAD</name>
        <dbReference type="ChEBI" id="CHEBI:57692"/>
    </cofactor>
</comment>
<comment type="pathway">
    <text evidence="1">Cell wall biogenesis; peptidoglycan biosynthesis.</text>
</comment>
<comment type="subcellular location">
    <subcellularLocation>
        <location evidence="1">Cytoplasm</location>
    </subcellularLocation>
</comment>
<comment type="similarity">
    <text evidence="1">Belongs to the MurB family.</text>
</comment>
<accession>Q92NM1</accession>
<feature type="chain" id="PRO_0000179247" description="UDP-N-acetylenolpyruvoylglucosamine reductase">
    <location>
        <begin position="1"/>
        <end position="324"/>
    </location>
</feature>
<feature type="domain" description="FAD-binding PCMH-type" evidence="1">
    <location>
        <begin position="36"/>
        <end position="203"/>
    </location>
</feature>
<feature type="active site" evidence="1">
    <location>
        <position position="183"/>
    </location>
</feature>
<feature type="active site" description="Proton donor" evidence="1">
    <location>
        <position position="232"/>
    </location>
</feature>
<feature type="active site" evidence="1">
    <location>
        <position position="302"/>
    </location>
</feature>